<gene>
    <name evidence="1" type="primary">matP</name>
    <name type="ordered locus">YE1580</name>
</gene>
<dbReference type="EMBL" id="AM286415">
    <property type="protein sequence ID" value="CAL11657.1"/>
    <property type="molecule type" value="Genomic_DNA"/>
</dbReference>
<dbReference type="RefSeq" id="WP_005170880.1">
    <property type="nucleotide sequence ID" value="NC_008800.1"/>
</dbReference>
<dbReference type="RefSeq" id="YP_001005873.1">
    <property type="nucleotide sequence ID" value="NC_008800.1"/>
</dbReference>
<dbReference type="SMR" id="A1JMT1"/>
<dbReference type="GeneID" id="93969318"/>
<dbReference type="KEGG" id="yen:YE1580"/>
<dbReference type="PATRIC" id="fig|393305.7.peg.1709"/>
<dbReference type="eggNOG" id="COG3120">
    <property type="taxonomic scope" value="Bacteria"/>
</dbReference>
<dbReference type="HOGENOM" id="CLU_142157_0_0_6"/>
<dbReference type="OrthoDB" id="5814691at2"/>
<dbReference type="Proteomes" id="UP000000642">
    <property type="component" value="Chromosome"/>
</dbReference>
<dbReference type="GO" id="GO:0005737">
    <property type="term" value="C:cytoplasm"/>
    <property type="evidence" value="ECO:0007669"/>
    <property type="project" value="UniProtKB-SubCell"/>
</dbReference>
<dbReference type="GO" id="GO:0043565">
    <property type="term" value="F:sequence-specific DNA binding"/>
    <property type="evidence" value="ECO:0007669"/>
    <property type="project" value="UniProtKB-UniRule"/>
</dbReference>
<dbReference type="GO" id="GO:0051301">
    <property type="term" value="P:cell division"/>
    <property type="evidence" value="ECO:0007669"/>
    <property type="project" value="UniProtKB-UniRule"/>
</dbReference>
<dbReference type="GO" id="GO:0006355">
    <property type="term" value="P:regulation of DNA-templated transcription"/>
    <property type="evidence" value="ECO:0007669"/>
    <property type="project" value="InterPro"/>
</dbReference>
<dbReference type="Gene3D" id="1.20.1270.380">
    <property type="entry name" value="MatP, N-terminal domain"/>
    <property type="match status" value="1"/>
</dbReference>
<dbReference type="Gene3D" id="1.10.1220.10">
    <property type="entry name" value="Met repressor-like"/>
    <property type="match status" value="1"/>
</dbReference>
<dbReference type="HAMAP" id="MF_01073">
    <property type="entry name" value="MatP"/>
    <property type="match status" value="1"/>
</dbReference>
<dbReference type="InterPro" id="IPR013321">
    <property type="entry name" value="Arc_rbn_hlx_hlx"/>
</dbReference>
<dbReference type="InterPro" id="IPR009390">
    <property type="entry name" value="MatP"/>
</dbReference>
<dbReference type="InterPro" id="IPR035375">
    <property type="entry name" value="MatP_C"/>
</dbReference>
<dbReference type="InterPro" id="IPR035087">
    <property type="entry name" value="MatP_N"/>
</dbReference>
<dbReference type="InterPro" id="IPR038339">
    <property type="entry name" value="MatP_N_sf"/>
</dbReference>
<dbReference type="NCBIfam" id="NF003471">
    <property type="entry name" value="PRK05097.1"/>
    <property type="match status" value="1"/>
</dbReference>
<dbReference type="Pfam" id="PF06303">
    <property type="entry name" value="MatP"/>
    <property type="match status" value="1"/>
</dbReference>
<dbReference type="Pfam" id="PF17414">
    <property type="entry name" value="MatP_C"/>
    <property type="match status" value="1"/>
</dbReference>
<comment type="function">
    <text evidence="1">Required for spatial organization of the terminus region of the chromosome (Ter macrodomain) during the cell cycle. Prevents early segregation of duplicated Ter macrodomains during cell division. Binds specifically to matS, which is a 13 bp signature motif repeated within the Ter macrodomain.</text>
</comment>
<comment type="subunit">
    <text evidence="1">Homodimer.</text>
</comment>
<comment type="subcellular location">
    <subcellularLocation>
        <location evidence="1">Cytoplasm</location>
    </subcellularLocation>
</comment>
<comment type="similarity">
    <text evidence="1">Belongs to the MatP family.</text>
</comment>
<keyword id="KW-0131">Cell cycle</keyword>
<keyword id="KW-0132">Cell division</keyword>
<keyword id="KW-0963">Cytoplasm</keyword>
<keyword id="KW-0238">DNA-binding</keyword>
<sequence length="151" mass="17966">MKYQQLENLESGWKWAYLVKKHREGEAITRHIENSAAQDAVEQLMKLESEPVKVLEWIDTHMNMQLATRMKQTIRARRKRHFNAEHQHTRKKSIDLEFLVWQRLAALARRRGNTLSETVVQLIEDAERKEKYQNQMSSLKQDLQDILGKDV</sequence>
<reference key="1">
    <citation type="journal article" date="2006" name="PLoS Genet.">
        <title>The complete genome sequence and comparative genome analysis of the high pathogenicity Yersinia enterocolitica strain 8081.</title>
        <authorList>
            <person name="Thomson N.R."/>
            <person name="Howard S."/>
            <person name="Wren B.W."/>
            <person name="Holden M.T.G."/>
            <person name="Crossman L."/>
            <person name="Challis G.L."/>
            <person name="Churcher C."/>
            <person name="Mungall K."/>
            <person name="Brooks K."/>
            <person name="Chillingworth T."/>
            <person name="Feltwell T."/>
            <person name="Abdellah Z."/>
            <person name="Hauser H."/>
            <person name="Jagels K."/>
            <person name="Maddison M."/>
            <person name="Moule S."/>
            <person name="Sanders M."/>
            <person name="Whitehead S."/>
            <person name="Quail M.A."/>
            <person name="Dougan G."/>
            <person name="Parkhill J."/>
            <person name="Prentice M.B."/>
        </authorList>
    </citation>
    <scope>NUCLEOTIDE SEQUENCE [LARGE SCALE GENOMIC DNA]</scope>
    <source>
        <strain>NCTC 13174 / 8081</strain>
    </source>
</reference>
<feature type="chain" id="PRO_1000064640" description="Macrodomain Ter protein">
    <location>
        <begin position="1"/>
        <end position="151"/>
    </location>
</feature>
<protein>
    <recommendedName>
        <fullName evidence="1">Macrodomain Ter protein</fullName>
    </recommendedName>
</protein>
<proteinExistence type="inferred from homology"/>
<organism>
    <name type="scientific">Yersinia enterocolitica serotype O:8 / biotype 1B (strain NCTC 13174 / 8081)</name>
    <dbReference type="NCBI Taxonomy" id="393305"/>
    <lineage>
        <taxon>Bacteria</taxon>
        <taxon>Pseudomonadati</taxon>
        <taxon>Pseudomonadota</taxon>
        <taxon>Gammaproteobacteria</taxon>
        <taxon>Enterobacterales</taxon>
        <taxon>Yersiniaceae</taxon>
        <taxon>Yersinia</taxon>
    </lineage>
</organism>
<evidence type="ECO:0000255" key="1">
    <source>
        <dbReference type="HAMAP-Rule" id="MF_01073"/>
    </source>
</evidence>
<accession>A1JMT1</accession>
<name>MATP_YERE8</name>